<proteinExistence type="inferred from homology"/>
<keyword id="KW-0093">Biotin biosynthesis</keyword>
<keyword id="KW-0963">Cytoplasm</keyword>
<keyword id="KW-0378">Hydrolase</keyword>
<keyword id="KW-0719">Serine esterase</keyword>
<name>BIOH_SALCH</name>
<dbReference type="EC" id="3.1.1.85" evidence="2"/>
<dbReference type="EMBL" id="AE017220">
    <property type="protein sequence ID" value="AAX67347.1"/>
    <property type="molecule type" value="Genomic_DNA"/>
</dbReference>
<dbReference type="RefSeq" id="WP_000998145.1">
    <property type="nucleotide sequence ID" value="NC_006905.1"/>
</dbReference>
<dbReference type="SMR" id="Q57IW5"/>
<dbReference type="ESTHER" id="salty-BIOH">
    <property type="family name" value="BioH"/>
</dbReference>
<dbReference type="KEGG" id="sec:SCH_3441"/>
<dbReference type="HOGENOM" id="CLU_020336_12_2_6"/>
<dbReference type="UniPathway" id="UPA00078"/>
<dbReference type="Proteomes" id="UP000000538">
    <property type="component" value="Chromosome"/>
</dbReference>
<dbReference type="GO" id="GO:0005737">
    <property type="term" value="C:cytoplasm"/>
    <property type="evidence" value="ECO:0007669"/>
    <property type="project" value="UniProtKB-SubCell"/>
</dbReference>
<dbReference type="GO" id="GO:0090499">
    <property type="term" value="F:pimelyl-[acyl-carrier protein] methyl ester esterase activity"/>
    <property type="evidence" value="ECO:0007669"/>
    <property type="project" value="UniProtKB-EC"/>
</dbReference>
<dbReference type="GO" id="GO:0009102">
    <property type="term" value="P:biotin biosynthetic process"/>
    <property type="evidence" value="ECO:0007669"/>
    <property type="project" value="UniProtKB-UniRule"/>
</dbReference>
<dbReference type="FunFam" id="3.40.50.1820:FF:000045">
    <property type="entry name" value="Pimeloyl-[acyl-carrier protein] methyl ester esterase"/>
    <property type="match status" value="1"/>
</dbReference>
<dbReference type="Gene3D" id="3.40.50.1820">
    <property type="entry name" value="alpha/beta hydrolase"/>
    <property type="match status" value="1"/>
</dbReference>
<dbReference type="HAMAP" id="MF_01260">
    <property type="entry name" value="Carboxylester"/>
    <property type="match status" value="1"/>
</dbReference>
<dbReference type="InterPro" id="IPR000073">
    <property type="entry name" value="AB_hydrolase_1"/>
</dbReference>
<dbReference type="InterPro" id="IPR029058">
    <property type="entry name" value="AB_hydrolase_fold"/>
</dbReference>
<dbReference type="InterPro" id="IPR010076">
    <property type="entry name" value="BioH"/>
</dbReference>
<dbReference type="InterPro" id="IPR050228">
    <property type="entry name" value="Carboxylesterase_BioH"/>
</dbReference>
<dbReference type="NCBIfam" id="TIGR01738">
    <property type="entry name" value="bioH"/>
    <property type="match status" value="1"/>
</dbReference>
<dbReference type="NCBIfam" id="NF007674">
    <property type="entry name" value="PRK10349.1"/>
    <property type="match status" value="1"/>
</dbReference>
<dbReference type="PANTHER" id="PTHR43194">
    <property type="entry name" value="HYDROLASE ALPHA/BETA FOLD FAMILY"/>
    <property type="match status" value="1"/>
</dbReference>
<dbReference type="PANTHER" id="PTHR43194:SF5">
    <property type="entry name" value="PIMELOYL-[ACYL-CARRIER PROTEIN] METHYL ESTER ESTERASE"/>
    <property type="match status" value="1"/>
</dbReference>
<dbReference type="Pfam" id="PF00561">
    <property type="entry name" value="Abhydrolase_1"/>
    <property type="match status" value="1"/>
</dbReference>
<dbReference type="SUPFAM" id="SSF53474">
    <property type="entry name" value="alpha/beta-Hydrolases"/>
    <property type="match status" value="1"/>
</dbReference>
<sequence length="256" mass="28241">MNDIWWQTYGEGNCHLVLLHGWGLNAEVWHCIREELGSHFTLHLVDLPGYGRSSGFGAMTLEEMTAQVAKNAPDQAIWLGWSLGGLVASQMALTHPERVQALVTVASSPCFSAREGWPGIKPEILGGFQQQLSDDFQRTVERFLALQTLGTETARQDARTLKSVVLAQPMPDVEVLNGGLEILKTVDLREALKNVNMPFLRLYGYLDGLVPRKIAPLLDTLWPHSTSQIMAKAAHAPFISHPAAFCQALMTLKSSL</sequence>
<accession>Q57IW5</accession>
<feature type="chain" id="PRO_0000204488" description="Pimeloyl-[acyl-carrier protein] methyl ester esterase">
    <location>
        <begin position="1"/>
        <end position="256"/>
    </location>
</feature>
<feature type="domain" description="AB hydrolase-1" evidence="1">
    <location>
        <begin position="15"/>
        <end position="242"/>
    </location>
</feature>
<feature type="active site" description="Nucleophile" evidence="2">
    <location>
        <position position="82"/>
    </location>
</feature>
<feature type="active site" evidence="2">
    <location>
        <position position="207"/>
    </location>
</feature>
<feature type="active site" evidence="2">
    <location>
        <position position="235"/>
    </location>
</feature>
<feature type="binding site" evidence="2">
    <location>
        <position position="22"/>
    </location>
    <ligand>
        <name>substrate</name>
    </ligand>
</feature>
<feature type="binding site" evidence="2">
    <location>
        <begin position="82"/>
        <end position="83"/>
    </location>
    <ligand>
        <name>substrate</name>
    </ligand>
</feature>
<feature type="binding site" evidence="2">
    <location>
        <begin position="143"/>
        <end position="147"/>
    </location>
    <ligand>
        <name>substrate</name>
    </ligand>
</feature>
<feature type="binding site" evidence="2">
    <location>
        <position position="235"/>
    </location>
    <ligand>
        <name>substrate</name>
    </ligand>
</feature>
<gene>
    <name evidence="2" type="primary">bioH</name>
    <name type="ordered locus">SCH_3441</name>
</gene>
<evidence type="ECO:0000255" key="1"/>
<evidence type="ECO:0000255" key="2">
    <source>
        <dbReference type="HAMAP-Rule" id="MF_01260"/>
    </source>
</evidence>
<organism>
    <name type="scientific">Salmonella choleraesuis (strain SC-B67)</name>
    <dbReference type="NCBI Taxonomy" id="321314"/>
    <lineage>
        <taxon>Bacteria</taxon>
        <taxon>Pseudomonadati</taxon>
        <taxon>Pseudomonadota</taxon>
        <taxon>Gammaproteobacteria</taxon>
        <taxon>Enterobacterales</taxon>
        <taxon>Enterobacteriaceae</taxon>
        <taxon>Salmonella</taxon>
    </lineage>
</organism>
<protein>
    <recommendedName>
        <fullName evidence="2">Pimeloyl-[acyl-carrier protein] methyl ester esterase</fullName>
        <ecNumber evidence="2">3.1.1.85</ecNumber>
    </recommendedName>
    <alternativeName>
        <fullName evidence="2">Biotin synthesis protein BioH</fullName>
    </alternativeName>
    <alternativeName>
        <fullName evidence="2">Carboxylesterase BioH</fullName>
    </alternativeName>
</protein>
<reference key="1">
    <citation type="journal article" date="2005" name="Nucleic Acids Res.">
        <title>The genome sequence of Salmonella enterica serovar Choleraesuis, a highly invasive and resistant zoonotic pathogen.</title>
        <authorList>
            <person name="Chiu C.-H."/>
            <person name="Tang P."/>
            <person name="Chu C."/>
            <person name="Hu S."/>
            <person name="Bao Q."/>
            <person name="Yu J."/>
            <person name="Chou Y.-Y."/>
            <person name="Wang H.-S."/>
            <person name="Lee Y.-S."/>
        </authorList>
    </citation>
    <scope>NUCLEOTIDE SEQUENCE [LARGE SCALE GENOMIC DNA]</scope>
    <source>
        <strain>SC-B67</strain>
    </source>
</reference>
<comment type="function">
    <text evidence="2">The physiological role of BioH is to remove the methyl group introduced by BioC when the pimeloyl moiety is complete. It allows to synthesize pimeloyl-ACP via the fatty acid synthetic pathway through the hydrolysis of the ester bonds of pimeloyl-ACP esters.</text>
</comment>
<comment type="catalytic activity">
    <reaction evidence="2">
        <text>6-carboxyhexanoyl-[ACP] methyl ester + H2O = 6-carboxyhexanoyl-[ACP] + methanol + H(+)</text>
        <dbReference type="Rhea" id="RHEA:42700"/>
        <dbReference type="Rhea" id="RHEA-COMP:9955"/>
        <dbReference type="Rhea" id="RHEA-COMP:10186"/>
        <dbReference type="ChEBI" id="CHEBI:15377"/>
        <dbReference type="ChEBI" id="CHEBI:15378"/>
        <dbReference type="ChEBI" id="CHEBI:17790"/>
        <dbReference type="ChEBI" id="CHEBI:78846"/>
        <dbReference type="ChEBI" id="CHEBI:82735"/>
        <dbReference type="EC" id="3.1.1.85"/>
    </reaction>
</comment>
<comment type="pathway">
    <text evidence="2">Cofactor biosynthesis; biotin biosynthesis.</text>
</comment>
<comment type="subunit">
    <text evidence="2">Monomer.</text>
</comment>
<comment type="subcellular location">
    <subcellularLocation>
        <location evidence="2">Cytoplasm</location>
    </subcellularLocation>
</comment>
<comment type="similarity">
    <text evidence="2">Belongs to the AB hydrolase superfamily. Carboxylesterase BioH family.</text>
</comment>